<name>SG11B_MOUSE</name>
<feature type="signal peptide" evidence="4">
    <location>
        <begin position="1"/>
        <end position="26"/>
    </location>
</feature>
<feature type="chain" id="PRO_5015097509" description="Sperm-associated antigen 11B" evidence="4">
    <location>
        <begin position="27"/>
        <end position="113"/>
    </location>
</feature>
<feature type="disulfide bond" evidence="3">
    <location>
        <begin position="80"/>
        <end position="108"/>
    </location>
</feature>
<feature type="disulfide bond" evidence="3">
    <location>
        <begin position="87"/>
        <end position="101"/>
    </location>
</feature>
<feature type="disulfide bond" evidence="3">
    <location>
        <begin position="91"/>
        <end position="109"/>
    </location>
</feature>
<feature type="splice variant" id="VSP_061386" description="In isoform 2.">
    <original>P</original>
    <variation>PA</variation>
    <location>
        <position position="20"/>
    </location>
</feature>
<feature type="splice variant" id="VSP_061387" description="In isoform 2.">
    <original>EPEPNYQIVNCKKSEGQCQE</original>
    <variation>GKSSTQDQGKFIHLGNTERM</variation>
    <location>
        <begin position="70"/>
        <end position="89"/>
    </location>
</feature>
<feature type="splice variant" id="VSP_061388" description="In isoform 2.">
    <location>
        <begin position="90"/>
        <end position="113"/>
    </location>
</feature>
<feature type="sequence conflict" description="In Ref. 1; AAT57926." evidence="6" ref="1">
    <original>A</original>
    <variation>V</variation>
    <location>
        <position position="10"/>
    </location>
</feature>
<comment type="function">
    <text evidence="2">Has antimicrobial activity against E.coli (By similarity). Plays a role in the defense response in the male reproductive tract, contributing to sperm maturation, storage and protection (By similarity).</text>
</comment>
<comment type="subcellular location">
    <subcellularLocation>
        <location evidence="6">Secreted</location>
    </subcellularLocation>
</comment>
<comment type="alternative products">
    <event type="alternative splicing"/>
    <isoform>
        <id>Q3UW43-1</id>
        <name>1</name>
        <sequence type="displayed"/>
    </isoform>
    <isoform>
        <id>Q3UW43-2</id>
        <name>2</name>
        <sequence type="described" ref="VSP_061386 VSP_061387 VSP_061388"/>
    </isoform>
</comment>
<comment type="similarity">
    <text evidence="6">Belongs to the beta-defensin family.</text>
</comment>
<gene>
    <name evidence="10" type="primary">Spag11b</name>
    <name evidence="1" type="synonym">Ep2</name>
    <name evidence="6" type="synonym">Ep2c/h</name>
    <name evidence="5" type="synonym">Spag11c</name>
</gene>
<reference evidence="7" key="1">
    <citation type="submission" date="2004-02" db="EMBL/GenBank/DDBJ databases">
        <title>Identification of novel beta-defensin isoforms in mice.</title>
        <authorList>
            <person name="Yashwanth R."/>
            <person name="Yenugu S."/>
            <person name="Hamil K.G."/>
            <person name="French F.S."/>
            <person name="Hall S.H."/>
        </authorList>
    </citation>
    <scope>NUCLEOTIDE SEQUENCE [MRNA] (ISOFORM 2)</scope>
    <source>
        <strain>CD</strain>
        <tissue>Epididymis</tissue>
    </source>
</reference>
<reference evidence="8" key="2">
    <citation type="journal article" date="2005" name="Physiol. Genomics">
        <title>Cross-species analysis of the mammalian beta-defensin gene family: presence of syntenic gene clusters and preferential expression in the male reproductive tract.</title>
        <authorList>
            <person name="Patil A.A."/>
            <person name="Cai Y."/>
            <person name="Sang Y."/>
            <person name="Blecha F."/>
            <person name="Zhang G."/>
        </authorList>
    </citation>
    <scope>NUCLEOTIDE SEQUENCE [MRNA] (ISOFORM 1)</scope>
</reference>
<reference evidence="9" key="3">
    <citation type="journal article" date="2005" name="Science">
        <title>The transcriptional landscape of the mammalian genome.</title>
        <authorList>
            <person name="Carninci P."/>
            <person name="Kasukawa T."/>
            <person name="Katayama S."/>
            <person name="Gough J."/>
            <person name="Frith M.C."/>
            <person name="Maeda N."/>
            <person name="Oyama R."/>
            <person name="Ravasi T."/>
            <person name="Lenhard B."/>
            <person name="Wells C."/>
            <person name="Kodzius R."/>
            <person name="Shimokawa K."/>
            <person name="Bajic V.B."/>
            <person name="Brenner S.E."/>
            <person name="Batalov S."/>
            <person name="Forrest A.R."/>
            <person name="Zavolan M."/>
            <person name="Davis M.J."/>
            <person name="Wilming L.G."/>
            <person name="Aidinis V."/>
            <person name="Allen J.E."/>
            <person name="Ambesi-Impiombato A."/>
            <person name="Apweiler R."/>
            <person name="Aturaliya R.N."/>
            <person name="Bailey T.L."/>
            <person name="Bansal M."/>
            <person name="Baxter L."/>
            <person name="Beisel K.W."/>
            <person name="Bersano T."/>
            <person name="Bono H."/>
            <person name="Chalk A.M."/>
            <person name="Chiu K.P."/>
            <person name="Choudhary V."/>
            <person name="Christoffels A."/>
            <person name="Clutterbuck D.R."/>
            <person name="Crowe M.L."/>
            <person name="Dalla E."/>
            <person name="Dalrymple B.P."/>
            <person name="de Bono B."/>
            <person name="Della Gatta G."/>
            <person name="di Bernardo D."/>
            <person name="Down T."/>
            <person name="Engstrom P."/>
            <person name="Fagiolini M."/>
            <person name="Faulkner G."/>
            <person name="Fletcher C.F."/>
            <person name="Fukushima T."/>
            <person name="Furuno M."/>
            <person name="Futaki S."/>
            <person name="Gariboldi M."/>
            <person name="Georgii-Hemming P."/>
            <person name="Gingeras T.R."/>
            <person name="Gojobori T."/>
            <person name="Green R.E."/>
            <person name="Gustincich S."/>
            <person name="Harbers M."/>
            <person name="Hayashi Y."/>
            <person name="Hensch T.K."/>
            <person name="Hirokawa N."/>
            <person name="Hill D."/>
            <person name="Huminiecki L."/>
            <person name="Iacono M."/>
            <person name="Ikeo K."/>
            <person name="Iwama A."/>
            <person name="Ishikawa T."/>
            <person name="Jakt M."/>
            <person name="Kanapin A."/>
            <person name="Katoh M."/>
            <person name="Kawasawa Y."/>
            <person name="Kelso J."/>
            <person name="Kitamura H."/>
            <person name="Kitano H."/>
            <person name="Kollias G."/>
            <person name="Krishnan S.P."/>
            <person name="Kruger A."/>
            <person name="Kummerfeld S.K."/>
            <person name="Kurochkin I.V."/>
            <person name="Lareau L.F."/>
            <person name="Lazarevic D."/>
            <person name="Lipovich L."/>
            <person name="Liu J."/>
            <person name="Liuni S."/>
            <person name="McWilliam S."/>
            <person name="Madan Babu M."/>
            <person name="Madera M."/>
            <person name="Marchionni L."/>
            <person name="Matsuda H."/>
            <person name="Matsuzawa S."/>
            <person name="Miki H."/>
            <person name="Mignone F."/>
            <person name="Miyake S."/>
            <person name="Morris K."/>
            <person name="Mottagui-Tabar S."/>
            <person name="Mulder N."/>
            <person name="Nakano N."/>
            <person name="Nakauchi H."/>
            <person name="Ng P."/>
            <person name="Nilsson R."/>
            <person name="Nishiguchi S."/>
            <person name="Nishikawa S."/>
            <person name="Nori F."/>
            <person name="Ohara O."/>
            <person name="Okazaki Y."/>
            <person name="Orlando V."/>
            <person name="Pang K.C."/>
            <person name="Pavan W.J."/>
            <person name="Pavesi G."/>
            <person name="Pesole G."/>
            <person name="Petrovsky N."/>
            <person name="Piazza S."/>
            <person name="Reed J."/>
            <person name="Reid J.F."/>
            <person name="Ring B.Z."/>
            <person name="Ringwald M."/>
            <person name="Rost B."/>
            <person name="Ruan Y."/>
            <person name="Salzberg S.L."/>
            <person name="Sandelin A."/>
            <person name="Schneider C."/>
            <person name="Schoenbach C."/>
            <person name="Sekiguchi K."/>
            <person name="Semple C.A."/>
            <person name="Seno S."/>
            <person name="Sessa L."/>
            <person name="Sheng Y."/>
            <person name="Shibata Y."/>
            <person name="Shimada H."/>
            <person name="Shimada K."/>
            <person name="Silva D."/>
            <person name="Sinclair B."/>
            <person name="Sperling S."/>
            <person name="Stupka E."/>
            <person name="Sugiura K."/>
            <person name="Sultana R."/>
            <person name="Takenaka Y."/>
            <person name="Taki K."/>
            <person name="Tammoja K."/>
            <person name="Tan S.L."/>
            <person name="Tang S."/>
            <person name="Taylor M.S."/>
            <person name="Tegner J."/>
            <person name="Teichmann S.A."/>
            <person name="Ueda H.R."/>
            <person name="van Nimwegen E."/>
            <person name="Verardo R."/>
            <person name="Wei C.L."/>
            <person name="Yagi K."/>
            <person name="Yamanishi H."/>
            <person name="Zabarovsky E."/>
            <person name="Zhu S."/>
            <person name="Zimmer A."/>
            <person name="Hide W."/>
            <person name="Bult C."/>
            <person name="Grimmond S.M."/>
            <person name="Teasdale R.D."/>
            <person name="Liu E.T."/>
            <person name="Brusic V."/>
            <person name="Quackenbush J."/>
            <person name="Wahlestedt C."/>
            <person name="Mattick J.S."/>
            <person name="Hume D.A."/>
            <person name="Kai C."/>
            <person name="Sasaki D."/>
            <person name="Tomaru Y."/>
            <person name="Fukuda S."/>
            <person name="Kanamori-Katayama M."/>
            <person name="Suzuki M."/>
            <person name="Aoki J."/>
            <person name="Arakawa T."/>
            <person name="Iida J."/>
            <person name="Imamura K."/>
            <person name="Itoh M."/>
            <person name="Kato T."/>
            <person name="Kawaji H."/>
            <person name="Kawagashira N."/>
            <person name="Kawashima T."/>
            <person name="Kojima M."/>
            <person name="Kondo S."/>
            <person name="Konno H."/>
            <person name="Nakano K."/>
            <person name="Ninomiya N."/>
            <person name="Nishio T."/>
            <person name="Okada M."/>
            <person name="Plessy C."/>
            <person name="Shibata K."/>
            <person name="Shiraki T."/>
            <person name="Suzuki S."/>
            <person name="Tagami M."/>
            <person name="Waki K."/>
            <person name="Watahiki A."/>
            <person name="Okamura-Oho Y."/>
            <person name="Suzuki H."/>
            <person name="Kawai J."/>
            <person name="Hayashizaki Y."/>
        </authorList>
    </citation>
    <scope>NUCLEOTIDE SEQUENCE [LARGE SCALE MRNA] (ISOFORM 2)</scope>
    <source>
        <strain evidence="9">C57BL/6J</strain>
        <tissue evidence="9">Epididymis</tissue>
    </source>
</reference>
<reference evidence="11" key="4">
    <citation type="journal article" date="2009" name="PLoS Biol.">
        <title>Lineage-specific biology revealed by a finished genome assembly of the mouse.</title>
        <authorList>
            <person name="Church D.M."/>
            <person name="Goodstadt L."/>
            <person name="Hillier L.W."/>
            <person name="Zody M.C."/>
            <person name="Goldstein S."/>
            <person name="She X."/>
            <person name="Bult C.J."/>
            <person name="Agarwala R."/>
            <person name="Cherry J.L."/>
            <person name="DiCuccio M."/>
            <person name="Hlavina W."/>
            <person name="Kapustin Y."/>
            <person name="Meric P."/>
            <person name="Maglott D."/>
            <person name="Birtle Z."/>
            <person name="Marques A.C."/>
            <person name="Graves T."/>
            <person name="Zhou S."/>
            <person name="Teague B."/>
            <person name="Potamousis K."/>
            <person name="Churas C."/>
            <person name="Place M."/>
            <person name="Herschleb J."/>
            <person name="Runnheim R."/>
            <person name="Forrest D."/>
            <person name="Amos-Landgraf J."/>
            <person name="Schwartz D.C."/>
            <person name="Cheng Z."/>
            <person name="Lindblad-Toh K."/>
            <person name="Eichler E.E."/>
            <person name="Ponting C.P."/>
        </authorList>
    </citation>
    <scope>NUCLEOTIDE SEQUENCE [LARGE SCALE GENOMIC DNA]</scope>
    <source>
        <strain evidence="11">C57BL/6J</strain>
    </source>
</reference>
<evidence type="ECO:0000250" key="1">
    <source>
        <dbReference type="UniProtKB" id="Q08648"/>
    </source>
</evidence>
<evidence type="ECO:0000250" key="2">
    <source>
        <dbReference type="UniProtKB" id="Q8VBV2"/>
    </source>
</evidence>
<evidence type="ECO:0000250" key="3">
    <source>
        <dbReference type="UniProtKB" id="Q91V82"/>
    </source>
</evidence>
<evidence type="ECO:0000255" key="4"/>
<evidence type="ECO:0000303" key="5">
    <source>
    </source>
</evidence>
<evidence type="ECO:0000305" key="6"/>
<evidence type="ECO:0000312" key="7">
    <source>
        <dbReference type="EMBL" id="AAT57926.1"/>
    </source>
</evidence>
<evidence type="ECO:0000312" key="8">
    <source>
        <dbReference type="EMBL" id="AAY59787.1"/>
    </source>
</evidence>
<evidence type="ECO:0000312" key="9">
    <source>
        <dbReference type="EMBL" id="BAE23076.1"/>
    </source>
</evidence>
<evidence type="ECO:0000312" key="10">
    <source>
        <dbReference type="MGI" id="MGI:3647173"/>
    </source>
</evidence>
<evidence type="ECO:0000312" key="11">
    <source>
        <dbReference type="Proteomes" id="UP000000589"/>
    </source>
</evidence>
<organism evidence="11">
    <name type="scientific">Mus musculus</name>
    <name type="common">Mouse</name>
    <dbReference type="NCBI Taxonomy" id="10090"/>
    <lineage>
        <taxon>Eukaryota</taxon>
        <taxon>Metazoa</taxon>
        <taxon>Chordata</taxon>
        <taxon>Craniata</taxon>
        <taxon>Vertebrata</taxon>
        <taxon>Euteleostomi</taxon>
        <taxon>Mammalia</taxon>
        <taxon>Eutheria</taxon>
        <taxon>Euarchontoglires</taxon>
        <taxon>Glires</taxon>
        <taxon>Rodentia</taxon>
        <taxon>Myomorpha</taxon>
        <taxon>Muroidea</taxon>
        <taxon>Muridae</taxon>
        <taxon>Murinae</taxon>
        <taxon>Mus</taxon>
        <taxon>Mus</taxon>
    </lineage>
</organism>
<protein>
    <recommendedName>
        <fullName evidence="10">Sperm-associated antigen 11B</fullName>
    </recommendedName>
    <alternativeName>
        <fullName evidence="1">Protein EP2</fullName>
    </alternativeName>
</protein>
<proteinExistence type="inferred from homology"/>
<accession>Q3UW43</accession>
<accession>Q2HPE2</accession>
<sequence length="113" mass="12857">MIPRLLPFFASLLFAALLFPGLSNASSINHLVTEPPSFPKDEFPARGVNGSQLLHHRVKRLPPRTPPYHEPEPNYQIVNCKKSEGQCQEYCNFMETQVGYCSKKKEPCCLHPF</sequence>
<keyword id="KW-0025">Alternative splicing</keyword>
<keyword id="KW-0044">Antibiotic</keyword>
<keyword id="KW-0929">Antimicrobial</keyword>
<keyword id="KW-0211">Defensin</keyword>
<keyword id="KW-1015">Disulfide bond</keyword>
<keyword id="KW-1185">Reference proteome</keyword>
<keyword id="KW-0964">Secreted</keyword>
<keyword id="KW-0732">Signal</keyword>
<dbReference type="EMBL" id="AY552531">
    <property type="protein sequence ID" value="AAT57926.1"/>
    <property type="molecule type" value="mRNA"/>
</dbReference>
<dbReference type="EMBL" id="DQ012055">
    <property type="protein sequence ID" value="AAY59787.1"/>
    <property type="molecule type" value="mRNA"/>
</dbReference>
<dbReference type="EMBL" id="AK136627">
    <property type="protein sequence ID" value="BAE23076.1"/>
    <property type="molecule type" value="mRNA"/>
</dbReference>
<dbReference type="CCDS" id="CCDS22133.1">
    <molecule id="Q3UW43-1"/>
</dbReference>
<dbReference type="CCDS" id="CCDS40251.1">
    <molecule id="Q3UW43-2"/>
</dbReference>
<dbReference type="RefSeq" id="NP_001030077.1">
    <molecule id="Q3UW43-2"/>
    <property type="nucleotide sequence ID" value="NM_001034905.2"/>
</dbReference>
<dbReference type="RefSeq" id="NP_001034652.2">
    <molecule id="Q3UW43-1"/>
    <property type="nucleotide sequence ID" value="NM_001039563.3"/>
</dbReference>
<dbReference type="RefSeq" id="NP_001273422.1">
    <property type="nucleotide sequence ID" value="NM_001286493.1"/>
</dbReference>
<dbReference type="FunCoup" id="Q3UW43">
    <property type="interactions" value="1"/>
</dbReference>
<dbReference type="STRING" id="10090.ENSMUSP00000048125"/>
<dbReference type="PaxDb" id="10090-ENSMUSP00000048125"/>
<dbReference type="Ensembl" id="ENSMUST00000039075.8">
    <molecule id="Q3UW43-1"/>
    <property type="protein sequence ID" value="ENSMUSP00000048125.8"/>
    <property type="gene ID" value="ENSMUSG00000059463.8"/>
</dbReference>
<dbReference type="Ensembl" id="ENSMUST00000110767.2">
    <molecule id="Q3UW43-2"/>
    <property type="protein sequence ID" value="ENSMUSP00000106395.2"/>
    <property type="gene ID" value="ENSMUSG00000059463.8"/>
</dbReference>
<dbReference type="GeneID" id="546038"/>
<dbReference type="KEGG" id="mmu:546038"/>
<dbReference type="UCSC" id="uc009laf.1">
    <molecule id="Q3UW43-1"/>
    <property type="organism name" value="mouse"/>
</dbReference>
<dbReference type="AGR" id="MGI:3647173"/>
<dbReference type="CTD" id="10407"/>
<dbReference type="MGI" id="MGI:3647173">
    <property type="gene designation" value="Spag11b"/>
</dbReference>
<dbReference type="VEuPathDB" id="HostDB:ENSMUSG00000059463"/>
<dbReference type="GeneTree" id="ENSGT00940000161432"/>
<dbReference type="HOGENOM" id="CLU_178650_0_0_1"/>
<dbReference type="InParanoid" id="Q3UW43"/>
<dbReference type="OMA" id="GYCQEYC"/>
<dbReference type="OrthoDB" id="74770at9989"/>
<dbReference type="PhylomeDB" id="Q3UW43"/>
<dbReference type="BioGRID-ORCS" id="546038">
    <property type="hits" value="3 hits in 77 CRISPR screens"/>
</dbReference>
<dbReference type="PRO" id="PR:Q3UW43"/>
<dbReference type="Proteomes" id="UP000000589">
    <property type="component" value="Chromosome 8"/>
</dbReference>
<dbReference type="Bgee" id="ENSMUSG00000059463">
    <property type="expression patterns" value="Expressed in esophagus and 10 other cell types or tissues"/>
</dbReference>
<dbReference type="ExpressionAtlas" id="Q3UW43">
    <property type="expression patterns" value="baseline and differential"/>
</dbReference>
<dbReference type="GO" id="GO:0005576">
    <property type="term" value="C:extracellular region"/>
    <property type="evidence" value="ECO:0007669"/>
    <property type="project" value="UniProtKB-SubCell"/>
</dbReference>
<dbReference type="GO" id="GO:0042742">
    <property type="term" value="P:defense response to bacterium"/>
    <property type="evidence" value="ECO:0007669"/>
    <property type="project" value="UniProtKB-KW"/>
</dbReference>
<dbReference type="InterPro" id="IPR001855">
    <property type="entry name" value="Defensin_beta-like"/>
</dbReference>
<dbReference type="InterPro" id="IPR007988">
    <property type="entry name" value="Sperm_Ag_11A_B"/>
</dbReference>
<dbReference type="PANTHER" id="PTHR14081:SF1">
    <property type="entry name" value="SPERM-ASSOCIATED ANTIGEN 11A-RELATED"/>
    <property type="match status" value="1"/>
</dbReference>
<dbReference type="PANTHER" id="PTHR14081">
    <property type="entry name" value="SPERM-ASSOCIATED ANTIGEN 11A-RELATED-RELATED"/>
    <property type="match status" value="1"/>
</dbReference>
<dbReference type="Pfam" id="PF00711">
    <property type="entry name" value="Defensin_beta"/>
    <property type="match status" value="1"/>
</dbReference>
<dbReference type="Pfam" id="PF05324">
    <property type="entry name" value="Sperm_Ag_HE2"/>
    <property type="match status" value="1"/>
</dbReference>